<proteinExistence type="inferred from homology"/>
<sequence>MAKKITRIAKLEFMAMQAKPGAELASLGINMPAFTREFNDATKDRAGDVVPVVITAYDDKSFDFVLKTTPAAYMLKKVAKIEKGASNSKTQTVATVTLDDIRSIAEYKMPDLNANTIEAAMKQIIGTAKNMGIKVTGMEDFK</sequence>
<name>RL11_MYCCT</name>
<protein>
    <recommendedName>
        <fullName evidence="1">Large ribosomal subunit protein uL11</fullName>
    </recommendedName>
    <alternativeName>
        <fullName evidence="2">50S ribosomal protein L11</fullName>
    </alternativeName>
</protein>
<comment type="function">
    <text evidence="1">Forms part of the ribosomal stalk which helps the ribosome interact with GTP-bound translation factors.</text>
</comment>
<comment type="subunit">
    <text evidence="1">Part of the ribosomal stalk of the 50S ribosomal subunit. Interacts with L10 and the large rRNA to form the base of the stalk. L10 forms an elongated spine to which L12 dimers bind in a sequential fashion forming a multimeric L10(L12)X complex.</text>
</comment>
<comment type="PTM">
    <text evidence="1">One or more lysine residues are methylated.</text>
</comment>
<comment type="similarity">
    <text evidence="1">Belongs to the universal ribosomal protein uL11 family.</text>
</comment>
<keyword id="KW-0488">Methylation</keyword>
<keyword id="KW-0687">Ribonucleoprotein</keyword>
<keyword id="KW-0689">Ribosomal protein</keyword>
<keyword id="KW-0694">RNA-binding</keyword>
<keyword id="KW-0699">rRNA-binding</keyword>
<accession>Q2ST53</accession>
<dbReference type="EMBL" id="CP000123">
    <property type="protein sequence ID" value="ABC01745.1"/>
    <property type="molecule type" value="Genomic_DNA"/>
</dbReference>
<dbReference type="RefSeq" id="WP_011386965.1">
    <property type="nucleotide sequence ID" value="NC_007633.1"/>
</dbReference>
<dbReference type="SMR" id="Q2ST53"/>
<dbReference type="GeneID" id="23778980"/>
<dbReference type="KEGG" id="mcp:MCAP_0065"/>
<dbReference type="HOGENOM" id="CLU_074237_2_2_14"/>
<dbReference type="PhylomeDB" id="Q2ST53"/>
<dbReference type="Proteomes" id="UP000001928">
    <property type="component" value="Chromosome"/>
</dbReference>
<dbReference type="GO" id="GO:0022625">
    <property type="term" value="C:cytosolic large ribosomal subunit"/>
    <property type="evidence" value="ECO:0007669"/>
    <property type="project" value="TreeGrafter"/>
</dbReference>
<dbReference type="GO" id="GO:0070180">
    <property type="term" value="F:large ribosomal subunit rRNA binding"/>
    <property type="evidence" value="ECO:0007669"/>
    <property type="project" value="UniProtKB-UniRule"/>
</dbReference>
<dbReference type="GO" id="GO:0003735">
    <property type="term" value="F:structural constituent of ribosome"/>
    <property type="evidence" value="ECO:0007669"/>
    <property type="project" value="InterPro"/>
</dbReference>
<dbReference type="GO" id="GO:0006412">
    <property type="term" value="P:translation"/>
    <property type="evidence" value="ECO:0007669"/>
    <property type="project" value="UniProtKB-UniRule"/>
</dbReference>
<dbReference type="CDD" id="cd00349">
    <property type="entry name" value="Ribosomal_L11"/>
    <property type="match status" value="1"/>
</dbReference>
<dbReference type="FunFam" id="1.10.10.250:FF:000001">
    <property type="entry name" value="50S ribosomal protein L11"/>
    <property type="match status" value="1"/>
</dbReference>
<dbReference type="Gene3D" id="1.10.10.250">
    <property type="entry name" value="Ribosomal protein L11, C-terminal domain"/>
    <property type="match status" value="1"/>
</dbReference>
<dbReference type="Gene3D" id="3.30.1550.10">
    <property type="entry name" value="Ribosomal protein L11/L12, N-terminal domain"/>
    <property type="match status" value="1"/>
</dbReference>
<dbReference type="HAMAP" id="MF_00736">
    <property type="entry name" value="Ribosomal_uL11"/>
    <property type="match status" value="1"/>
</dbReference>
<dbReference type="InterPro" id="IPR000911">
    <property type="entry name" value="Ribosomal_uL11"/>
</dbReference>
<dbReference type="InterPro" id="IPR006519">
    <property type="entry name" value="Ribosomal_uL11_bac-typ"/>
</dbReference>
<dbReference type="InterPro" id="IPR020783">
    <property type="entry name" value="Ribosomal_uL11_C"/>
</dbReference>
<dbReference type="InterPro" id="IPR036769">
    <property type="entry name" value="Ribosomal_uL11_C_sf"/>
</dbReference>
<dbReference type="InterPro" id="IPR020785">
    <property type="entry name" value="Ribosomal_uL11_CS"/>
</dbReference>
<dbReference type="InterPro" id="IPR020784">
    <property type="entry name" value="Ribosomal_uL11_N"/>
</dbReference>
<dbReference type="InterPro" id="IPR036796">
    <property type="entry name" value="Ribosomal_uL11_N_sf"/>
</dbReference>
<dbReference type="NCBIfam" id="TIGR01632">
    <property type="entry name" value="L11_bact"/>
    <property type="match status" value="1"/>
</dbReference>
<dbReference type="PANTHER" id="PTHR11661">
    <property type="entry name" value="60S RIBOSOMAL PROTEIN L12"/>
    <property type="match status" value="1"/>
</dbReference>
<dbReference type="PANTHER" id="PTHR11661:SF1">
    <property type="entry name" value="LARGE RIBOSOMAL SUBUNIT PROTEIN UL11M"/>
    <property type="match status" value="1"/>
</dbReference>
<dbReference type="Pfam" id="PF00298">
    <property type="entry name" value="Ribosomal_L11"/>
    <property type="match status" value="1"/>
</dbReference>
<dbReference type="Pfam" id="PF03946">
    <property type="entry name" value="Ribosomal_L11_N"/>
    <property type="match status" value="1"/>
</dbReference>
<dbReference type="SMART" id="SM00649">
    <property type="entry name" value="RL11"/>
    <property type="match status" value="1"/>
</dbReference>
<dbReference type="SUPFAM" id="SSF54747">
    <property type="entry name" value="Ribosomal L11/L12e N-terminal domain"/>
    <property type="match status" value="1"/>
</dbReference>
<dbReference type="SUPFAM" id="SSF46906">
    <property type="entry name" value="Ribosomal protein L11, C-terminal domain"/>
    <property type="match status" value="1"/>
</dbReference>
<dbReference type="PROSITE" id="PS00359">
    <property type="entry name" value="RIBOSOMAL_L11"/>
    <property type="match status" value="1"/>
</dbReference>
<gene>
    <name evidence="1" type="primary">rplK</name>
    <name type="ordered locus">MCAP_0065</name>
</gene>
<feature type="chain" id="PRO_0000258171" description="Large ribosomal subunit protein uL11">
    <location>
        <begin position="1"/>
        <end position="142"/>
    </location>
</feature>
<reference key="1">
    <citation type="submission" date="2005-09" db="EMBL/GenBank/DDBJ databases">
        <authorList>
            <person name="Glass J.I."/>
            <person name="Lartigue C."/>
            <person name="Pfannkoch C."/>
            <person name="Baden-Tillson H."/>
            <person name="Smith H.O."/>
            <person name="Venter J.C."/>
            <person name="Roske K."/>
            <person name="Wise K.S."/>
            <person name="Calcutt M.J."/>
            <person name="Nelson W.C."/>
            <person name="Nierman W.C."/>
        </authorList>
    </citation>
    <scope>NUCLEOTIDE SEQUENCE [LARGE SCALE GENOMIC DNA]</scope>
    <source>
        <strain>California kid / ATCC 27343 / NCTC 10154</strain>
    </source>
</reference>
<evidence type="ECO:0000255" key="1">
    <source>
        <dbReference type="HAMAP-Rule" id="MF_00736"/>
    </source>
</evidence>
<evidence type="ECO:0000305" key="2"/>
<organism>
    <name type="scientific">Mycoplasma capricolum subsp. capricolum (strain California kid / ATCC 27343 / NCTC 10154)</name>
    <dbReference type="NCBI Taxonomy" id="340047"/>
    <lineage>
        <taxon>Bacteria</taxon>
        <taxon>Bacillati</taxon>
        <taxon>Mycoplasmatota</taxon>
        <taxon>Mollicutes</taxon>
        <taxon>Mycoplasmataceae</taxon>
        <taxon>Mycoplasma</taxon>
    </lineage>
</organism>